<gene>
    <name evidence="1" type="primary">NEC2</name>
    <name type="ordered locus">U34</name>
</gene>
<reference key="1">
    <citation type="journal article" date="1996" name="J. Virol.">
        <title>Determination and analysis of the complete nucleotide sequence of human herpesvirus.</title>
        <authorList>
            <person name="Nicholas J."/>
        </authorList>
    </citation>
    <scope>NUCLEOTIDE SEQUENCE [LARGE SCALE GENOMIC DNA]</scope>
</reference>
<evidence type="ECO:0000255" key="1">
    <source>
        <dbReference type="HAMAP-Rule" id="MF_04024"/>
    </source>
</evidence>
<proteinExistence type="inferred from homology"/>
<accession>P52466</accession>
<feature type="chain" id="PRO_0000116030" description="Nuclear egress protein 2">
    <location>
        <begin position="1"/>
        <end position="258"/>
    </location>
</feature>
<feature type="topological domain" description="Perinuclear space" evidence="1">
    <location>
        <begin position="1"/>
        <end position="228"/>
    </location>
</feature>
<feature type="transmembrane region" description="Helical" evidence="1">
    <location>
        <begin position="229"/>
        <end position="249"/>
    </location>
</feature>
<feature type="topological domain" description="Nuclear" evidence="1">
    <location>
        <begin position="250"/>
        <end position="258"/>
    </location>
</feature>
<name>NEC2_HHV7J</name>
<comment type="function">
    <text evidence="1">Plays an essential role in virion nuclear egress, the first step of virion release from infected cell. Within the host nucleus, NEC1 interacts with the newly formed capsid through the vertexes and directs it to the inner nuclear membrane by associating with NEC2. Induces the budding of the capsid at the inner nuclear membrane as well as its envelopment into the perinuclear space. There, the NEC1/NEC2 complex promotes the fusion of the enveloped capsid with the outer nuclear membrane and the subsequent release of the viral capsid into the cytoplasm where it will reach the secondary budding sites in the host Golgi or trans-Golgi network.</text>
</comment>
<comment type="subunit">
    <text evidence="1">Forms a heterohexameric complex with NEC1.</text>
</comment>
<comment type="subcellular location">
    <subcellularLocation>
        <location evidence="1">Host nucleus inner membrane</location>
        <topology evidence="1">Single-pass membrane protein</topology>
    </subcellularLocation>
    <text evidence="1">Also localizes at the transient membrane of perinuclear virions.</text>
</comment>
<comment type="PTM">
    <text evidence="1">Phosphorylated.</text>
</comment>
<comment type="similarity">
    <text evidence="1">Belongs to the herpesviridae NEC2 protein family.</text>
</comment>
<organismHost>
    <name type="scientific">Homo sapiens</name>
    <name type="common">Human</name>
    <dbReference type="NCBI Taxonomy" id="9606"/>
</organismHost>
<dbReference type="EMBL" id="U43400">
    <property type="protein sequence ID" value="AAC54696.1"/>
    <property type="molecule type" value="Genomic_DNA"/>
</dbReference>
<dbReference type="PIR" id="T41936">
    <property type="entry name" value="T41936"/>
</dbReference>
<dbReference type="RefSeq" id="YP_073774.1">
    <property type="nucleotide sequence ID" value="NC_001716.2"/>
</dbReference>
<dbReference type="SMR" id="P52466"/>
<dbReference type="DNASU" id="3289492"/>
<dbReference type="GeneID" id="3289492"/>
<dbReference type="KEGG" id="vg:3289492"/>
<dbReference type="Proteomes" id="UP000009246">
    <property type="component" value="Segment"/>
</dbReference>
<dbReference type="GO" id="GO:0044201">
    <property type="term" value="C:host cell nuclear inner membrane"/>
    <property type="evidence" value="ECO:0007669"/>
    <property type="project" value="UniProtKB-SubCell"/>
</dbReference>
<dbReference type="GO" id="GO:0016020">
    <property type="term" value="C:membrane"/>
    <property type="evidence" value="ECO:0007669"/>
    <property type="project" value="UniProtKB-KW"/>
</dbReference>
<dbReference type="HAMAP" id="MF_04024">
    <property type="entry name" value="HSV_NEC2"/>
    <property type="match status" value="1"/>
</dbReference>
<dbReference type="InterPro" id="IPR007626">
    <property type="entry name" value="Herpesvirus_viron_egress-type"/>
</dbReference>
<dbReference type="Pfam" id="PF04541">
    <property type="entry name" value="Herpes_U34"/>
    <property type="match status" value="1"/>
</dbReference>
<protein>
    <recommendedName>
        <fullName evidence="1">Nuclear egress protein 2</fullName>
    </recommendedName>
</protein>
<keyword id="KW-1043">Host membrane</keyword>
<keyword id="KW-1048">Host nucleus</keyword>
<keyword id="KW-0426">Late protein</keyword>
<keyword id="KW-0472">Membrane</keyword>
<keyword id="KW-0597">Phosphoprotein</keyword>
<keyword id="KW-1185">Reference proteome</keyword>
<keyword id="KW-0812">Transmembrane</keyword>
<keyword id="KW-1133">Transmembrane helix</keyword>
<organism>
    <name type="scientific">Human herpesvirus 7 (strain JI)</name>
    <name type="common">HHV-7</name>
    <name type="synonym">Human T lymphotropic virus</name>
    <dbReference type="NCBI Taxonomy" id="57278"/>
    <lineage>
        <taxon>Viruses</taxon>
        <taxon>Duplodnaviria</taxon>
        <taxon>Heunggongvirae</taxon>
        <taxon>Peploviricota</taxon>
        <taxon>Herviviricetes</taxon>
        <taxon>Herpesvirales</taxon>
        <taxon>Orthoherpesviridae</taxon>
        <taxon>Betaherpesvirinae</taxon>
        <taxon>Roseolovirus</taxon>
        <taxon>Roseolovirus humanbeta7</taxon>
        <taxon>Human betaherpesvirus 7</taxon>
    </lineage>
</organism>
<sequence length="258" mass="29290">MLKEKMYDELILSTCRVLKLGPADFRVTDKNLFSKNPKFPLCDILLKLDFAYSLEYLLSLWEDLTKQEARFIFKNTGGAVSMSCYLHAPIKQESQNIVKECNILNVNECLSVCLNDIEAIKPSSSGVLTKCIIRRNRDAAFIVEFVAFGPESESEYIALLKAIILKKKFLERQDLEKHRAARHIKKPLRLQLKSVGEMTSFRSINYMGNTKDAAVFPVTVPIFARRNNILCGFLVAALLIVCYVIFKEFALSADFSAV</sequence>